<protein>
    <recommendedName>
        <fullName evidence="1 11">Mycobacterial beta-ketoacyl-[acyl-carrier-protein] synthase III</fullName>
        <shortName evidence="1">Beta-ketoacyl-ACP synthase III</shortName>
        <shortName evidence="1">KAS III</shortName>
        <ecNumber evidence="2 3 5 6">2.3.1.301</ecNumber>
    </recommendedName>
    <alternativeName>
        <fullName evidence="1">3-oxoacyl-[acyl-carrier-protein] synthase 3</fullName>
    </alternativeName>
    <alternativeName>
        <fullName evidence="1">3-oxoacyl-[acyl-carrier-protein] synthase III</fullName>
    </alternativeName>
    <alternativeName>
        <fullName evidence="10">MtFabH</fullName>
    </alternativeName>
</protein>
<comment type="function">
    <text evidence="2 3 5 6">Catalyzes the condensation reaction of fatty acid synthesis by the addition to an acyl acceptor of two carbons from malonyl-ACP. Catalyzes the first condensation reaction which initiates fatty acid synthesis and may therefore play a role in governing the total rate of fatty acid production. Possesses both acetoacetyl-ACP synthase and acetyl transacylase activities (PubMed:10840036, PubMed:11278743, PubMed:16040614). Possesses a clear preference for long-chain acyl-CoA substrates rather than acyl-ACP primers. Its substrate specificity determines the biosynthesis of mycolic acid fatty acid chain, which is characteristic of mycobacterial cell wall (PubMed:10840036, PubMed:11278743, PubMed:16040614). In vitro, when AcpM (the natural partner) is used as the carrier, malonate incorporation increases with acyl chain length to reach an apparent maximum with primers ranging in length from C:14-CoA to C:20-CoA (PubMed:16040614). However, the initial acylation step shows preference for dodecanoyl-CoA, suggesting a role for AcpM in determining the specificity of the mtFabH reaction (PubMed:18096200). Shows only very weak activity with acetyl-CoA (PubMed:10840036, PubMed:11278743).</text>
</comment>
<comment type="catalytic activity">
    <reaction evidence="2 3 5 6">
        <text>malonyl-[ACP] + dodecanoyl-CoA + H(+) = 3-oxotetradecanoyl-[ACP] + CO2 + CoA</text>
        <dbReference type="Rhea" id="RHEA:43640"/>
        <dbReference type="Rhea" id="RHEA-COMP:9623"/>
        <dbReference type="Rhea" id="RHEA-COMP:9645"/>
        <dbReference type="ChEBI" id="CHEBI:15378"/>
        <dbReference type="ChEBI" id="CHEBI:16526"/>
        <dbReference type="ChEBI" id="CHEBI:57287"/>
        <dbReference type="ChEBI" id="CHEBI:57375"/>
        <dbReference type="ChEBI" id="CHEBI:78449"/>
        <dbReference type="ChEBI" id="CHEBI:78473"/>
        <dbReference type="EC" id="2.3.1.301"/>
    </reaction>
    <physiologicalReaction direction="left-to-right" evidence="2 3 5 6">
        <dbReference type="Rhea" id="RHEA:43641"/>
    </physiologicalReaction>
</comment>
<comment type="catalytic activity">
    <reaction evidence="3 5">
        <text>hexanoyl-CoA + malonyl-[ACP] + H(+) = 3-oxooctanoyl-[ACP] + CO2 + CoA</text>
        <dbReference type="Rhea" id="RHEA:42256"/>
        <dbReference type="Rhea" id="RHEA-COMP:9623"/>
        <dbReference type="Rhea" id="RHEA-COMP:9633"/>
        <dbReference type="ChEBI" id="CHEBI:15378"/>
        <dbReference type="ChEBI" id="CHEBI:16526"/>
        <dbReference type="ChEBI" id="CHEBI:57287"/>
        <dbReference type="ChEBI" id="CHEBI:62620"/>
        <dbReference type="ChEBI" id="CHEBI:78449"/>
        <dbReference type="ChEBI" id="CHEBI:78460"/>
    </reaction>
    <physiologicalReaction direction="left-to-right" evidence="3 5">
        <dbReference type="Rhea" id="RHEA:42257"/>
    </physiologicalReaction>
</comment>
<comment type="catalytic activity">
    <reaction evidence="2 3 5">
        <text>octanoyl-CoA + malonyl-[ACP] + H(+) = 3-oxodecanoyl-[ACP] + CO2 + CoA</text>
        <dbReference type="Rhea" id="RHEA:42264"/>
        <dbReference type="Rhea" id="RHEA-COMP:9623"/>
        <dbReference type="Rhea" id="RHEA-COMP:9637"/>
        <dbReference type="ChEBI" id="CHEBI:15378"/>
        <dbReference type="ChEBI" id="CHEBI:16526"/>
        <dbReference type="ChEBI" id="CHEBI:57287"/>
        <dbReference type="ChEBI" id="CHEBI:57386"/>
        <dbReference type="ChEBI" id="CHEBI:78449"/>
        <dbReference type="ChEBI" id="CHEBI:78464"/>
    </reaction>
    <physiologicalReaction direction="left-to-right" evidence="2 3 5">
        <dbReference type="Rhea" id="RHEA:42265"/>
    </physiologicalReaction>
</comment>
<comment type="catalytic activity">
    <reaction evidence="2 5">
        <text>decanoyl-CoA + malonyl-[ACP] + H(+) = 3-oxododecanoyl-[ACP] + CO2 + CoA</text>
        <dbReference type="Rhea" id="RHEA:43652"/>
        <dbReference type="Rhea" id="RHEA-COMP:9623"/>
        <dbReference type="Rhea" id="RHEA-COMP:9641"/>
        <dbReference type="ChEBI" id="CHEBI:15378"/>
        <dbReference type="ChEBI" id="CHEBI:16526"/>
        <dbReference type="ChEBI" id="CHEBI:57287"/>
        <dbReference type="ChEBI" id="CHEBI:61430"/>
        <dbReference type="ChEBI" id="CHEBI:78449"/>
        <dbReference type="ChEBI" id="CHEBI:78469"/>
    </reaction>
    <physiologicalReaction direction="left-to-right" evidence="2 5">
        <dbReference type="Rhea" id="RHEA:43653"/>
    </physiologicalReaction>
</comment>
<comment type="catalytic activity">
    <reaction evidence="2 3 5">
        <text>malonyl-[ACP] + tetradecanoyl-CoA + H(+) = 3-oxohexadecanoyl-[ACP] + CO2 + CoA</text>
        <dbReference type="Rhea" id="RHEA:43644"/>
        <dbReference type="Rhea" id="RHEA-COMP:9623"/>
        <dbReference type="Rhea" id="RHEA-COMP:9649"/>
        <dbReference type="ChEBI" id="CHEBI:15378"/>
        <dbReference type="ChEBI" id="CHEBI:16526"/>
        <dbReference type="ChEBI" id="CHEBI:57287"/>
        <dbReference type="ChEBI" id="CHEBI:57385"/>
        <dbReference type="ChEBI" id="CHEBI:78449"/>
        <dbReference type="ChEBI" id="CHEBI:78478"/>
    </reaction>
    <physiologicalReaction direction="left-to-right" evidence="2 3 5">
        <dbReference type="Rhea" id="RHEA:43645"/>
    </physiologicalReaction>
</comment>
<comment type="catalytic activity">
    <reaction evidence="2 3 5">
        <text>malonyl-[ACP] + hexadecanoyl-CoA + H(+) = 3-oxooctadecanoyl-[ACP] + CO2 + CoA</text>
        <dbReference type="Rhea" id="RHEA:43648"/>
        <dbReference type="Rhea" id="RHEA-COMP:9623"/>
        <dbReference type="Rhea" id="RHEA-COMP:9653"/>
        <dbReference type="ChEBI" id="CHEBI:15378"/>
        <dbReference type="ChEBI" id="CHEBI:16526"/>
        <dbReference type="ChEBI" id="CHEBI:57287"/>
        <dbReference type="ChEBI" id="CHEBI:57379"/>
        <dbReference type="ChEBI" id="CHEBI:78449"/>
        <dbReference type="ChEBI" id="CHEBI:78487"/>
    </reaction>
    <physiologicalReaction direction="left-to-right" evidence="2 3 5">
        <dbReference type="Rhea" id="RHEA:43649"/>
    </physiologicalReaction>
</comment>
<comment type="activity regulation">
    <text evidence="2 6 8">Phosphorylation on Thr-45 decreases activity (PubMed:19074144). Sensitive to thiolactomycin and resistant to cerulenin in vitro (PubMed:10840036). Inhibited by decylSSCoA, which modify both of the active site cysteines through disulfide linkage to the decylthio-group (PubMed:18096200).</text>
</comment>
<comment type="pathway">
    <text evidence="1">Lipid metabolism; fatty acid biosynthesis.</text>
</comment>
<comment type="pathway">
    <text evidence="1 12">Lipid metabolism; mycolic acid biosynthesis.</text>
</comment>
<comment type="subunit">
    <text evidence="3 4 6">Homodimer (PubMed:11278743, PubMed:15713483, PubMed:18096200). Both subunits can react with substrates or inhibitors (PubMed:18096200).</text>
</comment>
<comment type="subcellular location">
    <subcellularLocation>
        <location evidence="1">Cytoplasm</location>
    </subcellularLocation>
</comment>
<comment type="domain">
    <text evidence="1">The last Arg residue of the ACP-binding site is essential for the weak association between ACP/AcpP and FabH.</text>
</comment>
<comment type="domain">
    <text evidence="7">Exists in an 'open' form that permits binding of the long chain acyl-coenzyme A substrate and release of the corresponding 3-ketoacyl ACP product. Catalysis and intermediate steps in the process are proposed to occur in a 'closed' form of the enzyme.</text>
</comment>
<comment type="PTM">
    <text evidence="8">Phosphorylated on Thr-45 in vivo (PubMed:19074144). In vitro, can be phosphorylated by multiple Ser/Thr protein kinases (STPKs), particularly by PknF and PknA, and to a lesser extent by PknD, PknE and PknH (PubMed:19074144). Phosphorylation decreases enzymatic activity (PubMed:19074144). Phosphorylation may fine tune the interactions of mtFabH with the components of the FAS-II system (PubMed:19074144).</text>
</comment>
<comment type="miscellaneous">
    <text evidence="9">Was identified as a high-confidence drug target.</text>
</comment>
<comment type="similarity">
    <text evidence="1 11">Belongs to the thiolase-like superfamily. FabH family.</text>
</comment>
<feature type="initiator methionine" description="Removed" evidence="28">
    <location>
        <position position="1"/>
    </location>
</feature>
<feature type="chain" id="PRO_0000110443" description="Mycobacterial beta-ketoacyl-[acyl-carrier-protein] synthase III">
    <location>
        <begin position="2"/>
        <end position="335"/>
    </location>
</feature>
<feature type="region of interest" description="ACP-binding" evidence="1">
    <location>
        <begin position="259"/>
        <end position="263"/>
    </location>
</feature>
<feature type="active site" evidence="1 13 14">
    <location>
        <position position="122"/>
    </location>
</feature>
<feature type="active site" evidence="1 13 14">
    <location>
        <position position="258"/>
    </location>
</feature>
<feature type="active site" evidence="1 13 14">
    <location>
        <position position="289"/>
    </location>
</feature>
<feature type="binding site" evidence="4 15 19 27">
    <location>
        <position position="38"/>
    </location>
    <ligand>
        <name>dodecanoyl-CoA</name>
        <dbReference type="ChEBI" id="CHEBI:57375"/>
    </ligand>
</feature>
<feature type="binding site" evidence="4 13 16 19">
    <location>
        <position position="122"/>
    </location>
    <ligand>
        <name>dodecanoyl-CoA</name>
        <dbReference type="ChEBI" id="CHEBI:57375"/>
    </ligand>
</feature>
<feature type="binding site" evidence="13 16">
    <location>
        <position position="289"/>
    </location>
    <ligand>
        <name>dodecanoyl-CoA</name>
        <dbReference type="ChEBI" id="CHEBI:57375"/>
    </ligand>
</feature>
<feature type="binding site" evidence="13 16">
    <location>
        <position position="319"/>
    </location>
    <ligand>
        <name>dodecanoyl-CoA</name>
        <dbReference type="ChEBI" id="CHEBI:57375"/>
    </ligand>
</feature>
<feature type="binding site" evidence="4 19">
    <location>
        <position position="321"/>
    </location>
    <ligand>
        <name>dodecanoyl-CoA</name>
        <dbReference type="ChEBI" id="CHEBI:57375"/>
    </ligand>
</feature>
<feature type="modified residue" description="N-acetylthreonine" evidence="28">
    <location>
        <position position="2"/>
    </location>
</feature>
<feature type="modified residue" description="Phosphothreonine" evidence="8">
    <location>
        <position position="45"/>
    </location>
</feature>
<feature type="mutagenesis site" description="Retains 21% of wild-type activity. Loss of activity; when associated with A-161." evidence="5">
    <original>W</original>
    <variation>A</variation>
    <location>
        <position position="42"/>
    </location>
</feature>
<feature type="mutagenesis site" description="Abolishes phosphorylation. Does not affect activity." evidence="8">
    <original>T</original>
    <variation>A</variation>
    <location>
        <position position="45"/>
    </location>
</feature>
<feature type="mutagenesis site" description="Mimics constitutive phosphorylation. Exhibits markedly decreased transacylation, malonyl-AcpM decarboxylation and condensing activities." evidence="8">
    <original>T</original>
    <variation>D</variation>
    <location>
        <position position="45"/>
    </location>
</feature>
<feature type="mutagenesis site" description="Retains 7% of wild-type activity. Loss of activity; when associated with A-161." evidence="5">
    <original>R</original>
    <variation>A</variation>
    <location>
        <position position="46"/>
    </location>
</feature>
<feature type="mutagenesis site" description="Loss of activity." evidence="5">
    <original>T</original>
    <variation>F</variation>
    <location>
        <position position="97"/>
    </location>
</feature>
<feature type="mutagenesis site" description="Loss of activity." evidence="4 5">
    <original>C</original>
    <variation>A</variation>
    <location>
        <position position="122"/>
    </location>
</feature>
<feature type="mutagenesis site" description="Retains 69% of wild-type activity. Loss of activity; when associated with A-42 or A-46." evidence="5">
    <original>R</original>
    <variation>A</variation>
    <location>
        <position position="161"/>
    </location>
</feature>
<feature type="mutagenesis site" description="Loss of activity." evidence="5">
    <original>H</original>
    <variation>A</variation>
    <location>
        <position position="258"/>
    </location>
</feature>
<feature type="mutagenesis site" description="Loss of activity." evidence="7">
    <original>A</original>
    <variation>F</variation>
    <location>
        <position position="260"/>
    </location>
</feature>
<feature type="mutagenesis site" description="Loss of activity." evidence="5">
    <original>N</original>
    <variation>A</variation>
    <location>
        <position position="289"/>
    </location>
</feature>
<feature type="strand" evidence="29">
    <location>
        <begin position="13"/>
        <end position="21"/>
    </location>
</feature>
<feature type="strand" evidence="29">
    <location>
        <begin position="24"/>
        <end position="28"/>
    </location>
</feature>
<feature type="helix" evidence="29">
    <location>
        <begin position="29"/>
        <end position="32"/>
    </location>
</feature>
<feature type="strand" evidence="29">
    <location>
        <begin position="35"/>
        <end position="37"/>
    </location>
</feature>
<feature type="helix" evidence="29">
    <location>
        <begin position="40"/>
        <end position="47"/>
    </location>
</feature>
<feature type="strand" evidence="29">
    <location>
        <begin position="50"/>
        <end position="54"/>
    </location>
</feature>
<feature type="helix" evidence="29">
    <location>
        <begin position="61"/>
        <end position="76"/>
    </location>
</feature>
<feature type="helix" evidence="29">
    <location>
        <begin position="80"/>
        <end position="82"/>
    </location>
</feature>
<feature type="strand" evidence="29">
    <location>
        <begin position="85"/>
        <end position="89"/>
    </location>
</feature>
<feature type="strand" evidence="29">
    <location>
        <begin position="96"/>
        <end position="98"/>
    </location>
</feature>
<feature type="helix" evidence="29">
    <location>
        <begin position="100"/>
        <end position="108"/>
    </location>
</feature>
<feature type="strand" evidence="29">
    <location>
        <begin position="113"/>
        <end position="119"/>
    </location>
</feature>
<feature type="helix" evidence="29">
    <location>
        <begin position="121"/>
        <end position="123"/>
    </location>
</feature>
<feature type="helix" evidence="29">
    <location>
        <begin position="124"/>
        <end position="137"/>
    </location>
</feature>
<feature type="strand" evidence="29">
    <location>
        <begin position="142"/>
        <end position="151"/>
    </location>
</feature>
<feature type="helix" evidence="29">
    <location>
        <begin position="153"/>
        <end position="155"/>
    </location>
</feature>
<feature type="turn" evidence="29">
    <location>
        <begin position="161"/>
        <end position="166"/>
    </location>
</feature>
<feature type="strand" evidence="29">
    <location>
        <begin position="169"/>
        <end position="178"/>
    </location>
</feature>
<feature type="strand" evidence="29">
    <location>
        <begin position="188"/>
        <end position="191"/>
    </location>
</feature>
<feature type="helix" evidence="29">
    <location>
        <begin position="193"/>
        <end position="198"/>
    </location>
</feature>
<feature type="strand" evidence="29">
    <location>
        <begin position="199"/>
        <end position="203"/>
    </location>
</feature>
<feature type="helix" evidence="29">
    <location>
        <begin position="205"/>
        <end position="209"/>
    </location>
</feature>
<feature type="strand" evidence="29">
    <location>
        <begin position="219"/>
        <end position="221"/>
    </location>
</feature>
<feature type="helix" evidence="29">
    <location>
        <begin position="223"/>
        <end position="245"/>
    </location>
</feature>
<feature type="helix" evidence="29">
    <location>
        <begin position="249"/>
        <end position="251"/>
    </location>
</feature>
<feature type="strand" evidence="29">
    <location>
        <begin position="254"/>
        <end position="257"/>
    </location>
</feature>
<feature type="helix" evidence="29">
    <location>
        <begin position="262"/>
        <end position="272"/>
    </location>
</feature>
<feature type="helix" evidence="29">
    <location>
        <begin position="284"/>
        <end position="287"/>
    </location>
</feature>
<feature type="helix" evidence="29">
    <location>
        <begin position="291"/>
        <end position="293"/>
    </location>
</feature>
<feature type="helix" evidence="29">
    <location>
        <begin position="294"/>
        <end position="304"/>
    </location>
</feature>
<feature type="strand" evidence="30">
    <location>
        <begin position="306"/>
        <end position="308"/>
    </location>
</feature>
<feature type="strand" evidence="29">
    <location>
        <begin position="313"/>
        <end position="320"/>
    </location>
</feature>
<feature type="turn" evidence="29">
    <location>
        <begin position="321"/>
        <end position="323"/>
    </location>
</feature>
<feature type="strand" evidence="29">
    <location>
        <begin position="324"/>
        <end position="331"/>
    </location>
</feature>
<sequence>MTEIATTSGARSVGLLSVGAYRPERVVTNDEICQHIDSSDEWIYTRTGIKTRRFAADDESAASMATEACRRALSNAGLSAADIDGVIVTTNTHFLQTPPAAPMVAASLGAKGILGFDLSAGCAGFGYALGAAADMIRGGGAATMLVVGTEKLSPTIDMYDRGNCFIFADGAAAVVVGETPFQGIGPTVAGSDGEQADAIRQDIDWITFAQNPSGPRPFVRLEGPAVFRWAAFKMGDVGRRAMDAAGVRPDQIDVFVPHQANSRINELLVKNLQLRPDAVVANDIEHTGNTSAASIPLAMAELLTTGAAKPGDLALLIGYGAGLSYAAQVVRMPKG</sequence>
<keyword id="KW-0002">3D-structure</keyword>
<keyword id="KW-0007">Acetylation</keyword>
<keyword id="KW-0012">Acyltransferase</keyword>
<keyword id="KW-0963">Cytoplasm</keyword>
<keyword id="KW-0275">Fatty acid biosynthesis</keyword>
<keyword id="KW-0276">Fatty acid metabolism</keyword>
<keyword id="KW-0444">Lipid biosynthesis</keyword>
<keyword id="KW-0443">Lipid metabolism</keyword>
<keyword id="KW-0511">Multifunctional enzyme</keyword>
<keyword id="KW-0597">Phosphoprotein</keyword>
<keyword id="KW-1185">Reference proteome</keyword>
<keyword id="KW-0808">Transferase</keyword>
<gene>
    <name type="primary">fabH</name>
    <name type="ordered locus">Rv0533c</name>
    <name type="ORF">MTCY25D10.12c</name>
</gene>
<reference key="1">
    <citation type="journal article" date="1998" name="Nature">
        <title>Deciphering the biology of Mycobacterium tuberculosis from the complete genome sequence.</title>
        <authorList>
            <person name="Cole S.T."/>
            <person name="Brosch R."/>
            <person name="Parkhill J."/>
            <person name="Garnier T."/>
            <person name="Churcher C.M."/>
            <person name="Harris D.E."/>
            <person name="Gordon S.V."/>
            <person name="Eiglmeier K."/>
            <person name="Gas S."/>
            <person name="Barry C.E. III"/>
            <person name="Tekaia F."/>
            <person name="Badcock K."/>
            <person name="Basham D."/>
            <person name="Brown D."/>
            <person name="Chillingworth T."/>
            <person name="Connor R."/>
            <person name="Davies R.M."/>
            <person name="Devlin K."/>
            <person name="Feltwell T."/>
            <person name="Gentles S."/>
            <person name="Hamlin N."/>
            <person name="Holroyd S."/>
            <person name="Hornsby T."/>
            <person name="Jagels K."/>
            <person name="Krogh A."/>
            <person name="McLean J."/>
            <person name="Moule S."/>
            <person name="Murphy L.D."/>
            <person name="Oliver S."/>
            <person name="Osborne J."/>
            <person name="Quail M.A."/>
            <person name="Rajandream M.A."/>
            <person name="Rogers J."/>
            <person name="Rutter S."/>
            <person name="Seeger K."/>
            <person name="Skelton S."/>
            <person name="Squares S."/>
            <person name="Squares R."/>
            <person name="Sulston J.E."/>
            <person name="Taylor K."/>
            <person name="Whitehead S."/>
            <person name="Barrell B.G."/>
        </authorList>
    </citation>
    <scope>NUCLEOTIDE SEQUENCE [LARGE SCALE GENOMIC DNA]</scope>
    <source>
        <strain>ATCC 25618 / H37Rv</strain>
    </source>
</reference>
<reference key="2">
    <citation type="journal article" date="2000" name="J. Biol. Chem.">
        <title>Identification and substrate specificity of beta -ketoacyl (acyl carrier protein) synthase III (mtFabH) from Mycobacterium tuberculosis.</title>
        <authorList>
            <person name="Choi K.-H."/>
            <person name="Kremer L."/>
            <person name="Besra G.S."/>
            <person name="Rock C.O."/>
        </authorList>
    </citation>
    <scope>FUNCTION</scope>
    <scope>SUBSTRATE SPECIFICITY</scope>
    <scope>CATALYTIC ACTIVITY</scope>
    <scope>ACTIVITY REGULATION</scope>
    <scope>PATHWAY</scope>
</reference>
<reference key="3">
    <citation type="journal article" date="2008" name="BMC Syst. Biol.">
        <title>targetTB: a target identification pipeline for Mycobacterium tuberculosis through an interactome, reactome and genome-scale structural analysis.</title>
        <authorList>
            <person name="Raman K."/>
            <person name="Yeturu K."/>
            <person name="Chandra N."/>
        </authorList>
    </citation>
    <scope>IDENTIFICATION AS A DRUG TARGET [LARGE SCALE ANALYSIS]</scope>
</reference>
<reference key="4">
    <citation type="journal article" date="2009" name="J. Biol. Chem.">
        <title>The Mycobacterium tuberculosis beta-ketoacyl-acyl carrier protein synthase III activity is inhibited by phosphorylation on a single threonine residue.</title>
        <authorList>
            <person name="Veyron-Churlet R."/>
            <person name="Molle V."/>
            <person name="Taylor R.C."/>
            <person name="Brown A.K."/>
            <person name="Besra G.S."/>
            <person name="Zanella-Cleon I."/>
            <person name="Fuetterer K."/>
            <person name="Kremer L."/>
        </authorList>
    </citation>
    <scope>PHOSPHORYLATION AT THR-45</scope>
    <scope>ACTIVITY REGULATION</scope>
    <scope>MUTAGENESIS OF THR-45</scope>
    <source>
        <strain>H37Rv</strain>
    </source>
</reference>
<reference key="5">
    <citation type="journal article" date="2011" name="Mol. Cell. Proteomics">
        <title>Proteogenomic analysis of Mycobacterium tuberculosis by high resolution mass spectrometry.</title>
        <authorList>
            <person name="Kelkar D.S."/>
            <person name="Kumar D."/>
            <person name="Kumar P."/>
            <person name="Balakrishnan L."/>
            <person name="Muthusamy B."/>
            <person name="Yadav A.K."/>
            <person name="Shrivastava P."/>
            <person name="Marimuthu A."/>
            <person name="Anand S."/>
            <person name="Sundaram H."/>
            <person name="Kingsbury R."/>
            <person name="Harsha H.C."/>
            <person name="Nair B."/>
            <person name="Prasad T.S."/>
            <person name="Chauhan D.S."/>
            <person name="Katoch K."/>
            <person name="Katoch V.M."/>
            <person name="Kumar P."/>
            <person name="Chaerkady R."/>
            <person name="Ramachandran S."/>
            <person name="Dash D."/>
            <person name="Pandey A."/>
        </authorList>
    </citation>
    <scope>ACETYLATION [LARGE SCALE ANALYSIS] AT THR-2</scope>
    <scope>CLEAVAGE OF INITIATOR METHIONINE [LARGE SCALE ANALYSIS]</scope>
    <scope>IDENTIFICATION BY MASS SPECTROMETRY [LARGE SCALE ANALYSIS]</scope>
    <source>
        <strain>ATCC 25618 / H37Rv</strain>
    </source>
</reference>
<reference evidence="16" key="6">
    <citation type="journal article" date="2001" name="J. Biol. Chem.">
        <title>Crystal structure of the Mycobacterium tuberculosis beta-ketoacyl-acyl carrier protein synthase III.</title>
        <authorList>
            <person name="Scarsdale J.N."/>
            <person name="Kazanina G."/>
            <person name="He X."/>
            <person name="Reynolds K.A."/>
            <person name="Wright H.T."/>
        </authorList>
    </citation>
    <scope>X-RAY CRYSTALLOGRAPHY (2.1 ANGSTROMS) IN COMPLEX WITH DODECANOIC ACID</scope>
    <scope>FUNCTION</scope>
    <scope>CATALYTIC ACTIVITY</scope>
    <scope>SUBUNIT</scope>
    <scope>ACTIVE SITE</scope>
</reference>
<reference evidence="18 19" key="7">
    <citation type="journal article" date="2005" name="J. Mol. Biol.">
        <title>Crystal structure of a substrate complex of Mycobacterium tuberculosis beta-ketoacyl-acyl carrier protein synthase III (FabH) with lauroyl-coenzyme A.</title>
        <authorList>
            <person name="Musayev F."/>
            <person name="Sachdeva S."/>
            <person name="Scarsdale J.N."/>
            <person name="Reynolds K.A."/>
            <person name="Wright H.T."/>
        </authorList>
    </citation>
    <scope>X-RAY CRYSTALLOGRAPHY (1.85 ANGSTROMS) OF MUTANT ALA-122 IN APO FORM AND IN COMPLEX WITH DODECANOYL-COA</scope>
    <scope>SUBUNIT</scope>
    <scope>MUTAGENESIS OF CYS-122</scope>
</reference>
<reference evidence="17 20 21" key="8">
    <citation type="journal article" date="2005" name="J. Biol. Chem.">
        <title>Probing the mechanism of the Mycobacterium tuberculosis beta-ketoacyl-acyl carrier protein synthase III mtFabH: factors influencing catalysis and substrate specificity.</title>
        <authorList>
            <person name="Brown A.K."/>
            <person name="Sridharan S."/>
            <person name="Kremer L."/>
            <person name="Lindenberg S."/>
            <person name="Dover L.G."/>
            <person name="Sacchettini J.C."/>
            <person name="Besra G.S."/>
        </authorList>
    </citation>
    <scope>X-RAY CRYSTALLOGRAPHY (2.00 ANGSTROMS) OF WILD-TYPE AND OF DOUBLE MUTANTS ALA-42/ALA-161 AND ALA-46/ALA-161</scope>
    <scope>FUNCTION</scope>
    <scope>CATALYTIC ACTIVITY</scope>
    <scope>SUBSTRATE SPECIFICITY</scope>
    <scope>REACTION MECHANISM</scope>
    <scope>ACTIVE SITE</scope>
    <scope>MUTAGENESIS OF TRP-42; ARG-46; THR-97; CYS-122; ARG-161; HIS-258 AND ASN-289</scope>
    <source>
        <strain>H37Rv</strain>
    </source>
</reference>
<reference evidence="27" key="9">
    <citation type="journal article" date="2008" name="Bioorg. Chem.">
        <title>Probing reactivity and substrate specificity of both subunits of the dimeric Mycobacterium tuberculosis FabH using alkyl-CoA disulfide inhibitors and acyl-CoA substrates.</title>
        <authorList>
            <person name="Sachdeva S."/>
            <person name="Musayev F."/>
            <person name="Alhamadsheh M.M."/>
            <person name="Scarsdale J.N."/>
            <person name="Wright H.T."/>
            <person name="Reynolds K.A."/>
        </authorList>
    </citation>
    <scope>X-RAY CRYSTALLOGRAPHY (2.60 ANGSTROMS) IN COMPLEX WITH COA</scope>
    <scope>FUNCTION</scope>
    <scope>CATALYTIC ACTIVITY</scope>
    <scope>ACTIVITY REGULATION</scope>
    <scope>SUBUNIT</scope>
</reference>
<reference evidence="22 23 24 25 26" key="10">
    <citation type="journal article" date="2008" name="Chem. Biol.">
        <title>Separate entrance and exit portals for ligand traffic in Mycobacterium tuberculosis FabH.</title>
        <authorList>
            <person name="Sachdeva S."/>
            <person name="Musayev F.N."/>
            <person name="Alhamadsheh M.M."/>
            <person name="Scarsdale J.N."/>
            <person name="Wright H.T."/>
            <person name="Reynolds K.A."/>
        </authorList>
    </citation>
    <scope>X-RAY CRYSTALLOGRAPHY (1.85 ANGSTROMS) OF WILD-TYPE AND MUTANT PHE-260 IN COMPLEXES WITH INHIBITORS</scope>
    <scope>DOMAIN</scope>
    <scope>MUTAGENESIS OF ALA-260</scope>
</reference>
<evidence type="ECO:0000255" key="1">
    <source>
        <dbReference type="HAMAP-Rule" id="MF_01815"/>
    </source>
</evidence>
<evidence type="ECO:0000269" key="2">
    <source>
    </source>
</evidence>
<evidence type="ECO:0000269" key="3">
    <source>
    </source>
</evidence>
<evidence type="ECO:0000269" key="4">
    <source>
    </source>
</evidence>
<evidence type="ECO:0000269" key="5">
    <source>
    </source>
</evidence>
<evidence type="ECO:0000269" key="6">
    <source>
    </source>
</evidence>
<evidence type="ECO:0000269" key="7">
    <source>
    </source>
</evidence>
<evidence type="ECO:0000269" key="8">
    <source>
    </source>
</evidence>
<evidence type="ECO:0000269" key="9">
    <source>
    </source>
</evidence>
<evidence type="ECO:0000303" key="10">
    <source>
    </source>
</evidence>
<evidence type="ECO:0000305" key="11"/>
<evidence type="ECO:0000305" key="12">
    <source>
    </source>
</evidence>
<evidence type="ECO:0000305" key="13">
    <source>
    </source>
</evidence>
<evidence type="ECO:0000305" key="14">
    <source>
    </source>
</evidence>
<evidence type="ECO:0000305" key="15">
    <source>
    </source>
</evidence>
<evidence type="ECO:0007744" key="16">
    <source>
        <dbReference type="PDB" id="1HZP"/>
    </source>
</evidence>
<evidence type="ECO:0007744" key="17">
    <source>
        <dbReference type="PDB" id="1M1M"/>
    </source>
</evidence>
<evidence type="ECO:0007744" key="18">
    <source>
        <dbReference type="PDB" id="1U6E"/>
    </source>
</evidence>
<evidence type="ECO:0007744" key="19">
    <source>
        <dbReference type="PDB" id="1U6S"/>
    </source>
</evidence>
<evidence type="ECO:0007744" key="20">
    <source>
        <dbReference type="PDB" id="2AHB"/>
    </source>
</evidence>
<evidence type="ECO:0007744" key="21">
    <source>
        <dbReference type="PDB" id="2AJ9"/>
    </source>
</evidence>
<evidence type="ECO:0007744" key="22">
    <source>
        <dbReference type="PDB" id="2QNX"/>
    </source>
</evidence>
<evidence type="ECO:0007744" key="23">
    <source>
        <dbReference type="PDB" id="2QNY"/>
    </source>
</evidence>
<evidence type="ECO:0007744" key="24">
    <source>
        <dbReference type="PDB" id="2QNZ"/>
    </source>
</evidence>
<evidence type="ECO:0007744" key="25">
    <source>
        <dbReference type="PDB" id="2QO0"/>
    </source>
</evidence>
<evidence type="ECO:0007744" key="26">
    <source>
        <dbReference type="PDB" id="2QO1"/>
    </source>
</evidence>
<evidence type="ECO:0007744" key="27">
    <source>
        <dbReference type="PDB" id="2QX1"/>
    </source>
</evidence>
<evidence type="ECO:0007744" key="28">
    <source>
    </source>
</evidence>
<evidence type="ECO:0007829" key="29">
    <source>
        <dbReference type="PDB" id="1U6E"/>
    </source>
</evidence>
<evidence type="ECO:0007829" key="30">
    <source>
        <dbReference type="PDB" id="2AJ9"/>
    </source>
</evidence>
<proteinExistence type="evidence at protein level"/>
<name>FABH_MYCTU</name>
<accession>P9WNG3</accession>
<accession>L0T424</accession>
<accession>O06399</accession>
<accession>P0A574</accession>
<organism>
    <name type="scientific">Mycobacterium tuberculosis (strain ATCC 25618 / H37Rv)</name>
    <dbReference type="NCBI Taxonomy" id="83332"/>
    <lineage>
        <taxon>Bacteria</taxon>
        <taxon>Bacillati</taxon>
        <taxon>Actinomycetota</taxon>
        <taxon>Actinomycetes</taxon>
        <taxon>Mycobacteriales</taxon>
        <taxon>Mycobacteriaceae</taxon>
        <taxon>Mycobacterium</taxon>
        <taxon>Mycobacterium tuberculosis complex</taxon>
    </lineage>
</organism>
<dbReference type="EC" id="2.3.1.301" evidence="2 3 5 6"/>
<dbReference type="EMBL" id="AL123456">
    <property type="protein sequence ID" value="CCP43271.1"/>
    <property type="molecule type" value="Genomic_DNA"/>
</dbReference>
<dbReference type="PIR" id="H70545">
    <property type="entry name" value="H70545"/>
</dbReference>
<dbReference type="RefSeq" id="NP_215047.1">
    <property type="nucleotide sequence ID" value="NC_000962.3"/>
</dbReference>
<dbReference type="RefSeq" id="WP_003402861.1">
    <property type="nucleotide sequence ID" value="NZ_NVQJ01000036.1"/>
</dbReference>
<dbReference type="PDB" id="1HZP">
    <property type="method" value="X-ray"/>
    <property type="resolution" value="2.10 A"/>
    <property type="chains" value="A/B=1-335"/>
</dbReference>
<dbReference type="PDB" id="1M1M">
    <property type="method" value="X-ray"/>
    <property type="resolution" value="2.70 A"/>
    <property type="chains" value="A/B=1-335"/>
</dbReference>
<dbReference type="PDB" id="1U6E">
    <property type="method" value="X-ray"/>
    <property type="resolution" value="1.85 A"/>
    <property type="chains" value="A/B=1-335"/>
</dbReference>
<dbReference type="PDB" id="1U6S">
    <property type="method" value="X-ray"/>
    <property type="resolution" value="2.30 A"/>
    <property type="chains" value="A/B=1-335"/>
</dbReference>
<dbReference type="PDB" id="2AHB">
    <property type="method" value="X-ray"/>
    <property type="resolution" value="2.00 A"/>
    <property type="chains" value="A/B=1-335"/>
</dbReference>
<dbReference type="PDB" id="2AJ9">
    <property type="method" value="X-ray"/>
    <property type="resolution" value="2.50 A"/>
    <property type="chains" value="A/B=1-335"/>
</dbReference>
<dbReference type="PDB" id="2QNX">
    <property type="method" value="X-ray"/>
    <property type="resolution" value="2.70 A"/>
    <property type="chains" value="A/B=1-335"/>
</dbReference>
<dbReference type="PDB" id="2QNY">
    <property type="method" value="X-ray"/>
    <property type="resolution" value="2.15 A"/>
    <property type="chains" value="A/B=1-335"/>
</dbReference>
<dbReference type="PDB" id="2QNZ">
    <property type="method" value="X-ray"/>
    <property type="resolution" value="2.30 A"/>
    <property type="chains" value="A/B=1-335"/>
</dbReference>
<dbReference type="PDB" id="2QO0">
    <property type="method" value="X-ray"/>
    <property type="resolution" value="1.85 A"/>
    <property type="chains" value="A/B=1-335"/>
</dbReference>
<dbReference type="PDB" id="2QO1">
    <property type="method" value="X-ray"/>
    <property type="resolution" value="2.60 A"/>
    <property type="chains" value="A/B=1-335"/>
</dbReference>
<dbReference type="PDB" id="2QX1">
    <property type="method" value="X-ray"/>
    <property type="resolution" value="2.60 A"/>
    <property type="chains" value="A/B=1-335"/>
</dbReference>
<dbReference type="PDBsum" id="1HZP"/>
<dbReference type="PDBsum" id="1M1M"/>
<dbReference type="PDBsum" id="1U6E"/>
<dbReference type="PDBsum" id="1U6S"/>
<dbReference type="PDBsum" id="2AHB"/>
<dbReference type="PDBsum" id="2AJ9"/>
<dbReference type="PDBsum" id="2QNX"/>
<dbReference type="PDBsum" id="2QNY"/>
<dbReference type="PDBsum" id="2QNZ"/>
<dbReference type="PDBsum" id="2QO0"/>
<dbReference type="PDBsum" id="2QO1"/>
<dbReference type="PDBsum" id="2QX1"/>
<dbReference type="SMR" id="P9WNG3"/>
<dbReference type="FunCoup" id="P9WNG3">
    <property type="interactions" value="228"/>
</dbReference>
<dbReference type="STRING" id="83332.Rv0533c"/>
<dbReference type="BindingDB" id="P9WNG3"/>
<dbReference type="ChEMBL" id="CHEMBL3640"/>
<dbReference type="DrugBank" id="DB08712">
    <property type="generic name" value="11-[(MERCAPTOCARBONYL)OXY]UNDECANOIC ACID"/>
</dbReference>
<dbReference type="DrugBank" id="DB08171">
    <property type="generic name" value="11-MERCAPTOUNDECANOIC ACID"/>
</dbReference>
<dbReference type="DrugBank" id="DB07611">
    <property type="generic name" value="DECANE-1-THIOL"/>
</dbReference>
<dbReference type="DrugBank" id="DB07650">
    <property type="generic name" value="Decyl formate"/>
</dbReference>
<dbReference type="DrugBank" id="DB03264">
    <property type="generic name" value="Dodecyl-Coa"/>
</dbReference>
<dbReference type="DrugBank" id="DB03017">
    <property type="generic name" value="Lauric acid"/>
</dbReference>
<dbReference type="DrugBank" id="DB08684">
    <property type="generic name" value="O-Decyl Hydrogen Thiocarbonate"/>
</dbReference>
<dbReference type="SwissLipids" id="SLP:000000966"/>
<dbReference type="iPTMnet" id="P9WNG3"/>
<dbReference type="PaxDb" id="83332-Rv0533c"/>
<dbReference type="DNASU" id="887381"/>
<dbReference type="GeneID" id="45424497"/>
<dbReference type="GeneID" id="887381"/>
<dbReference type="KEGG" id="mtu:Rv0533c"/>
<dbReference type="KEGG" id="mtv:RVBD_0533c"/>
<dbReference type="TubercuList" id="Rv0533c"/>
<dbReference type="eggNOG" id="COG0332">
    <property type="taxonomic scope" value="Bacteria"/>
</dbReference>
<dbReference type="InParanoid" id="P9WNG3"/>
<dbReference type="OrthoDB" id="9815506at2"/>
<dbReference type="PhylomeDB" id="P9WNG3"/>
<dbReference type="BioCyc" id="MetaCyc:G185E-4666-MONOMER"/>
<dbReference type="BRENDA" id="2.3.1.180">
    <property type="organism ID" value="3445"/>
</dbReference>
<dbReference type="BRENDA" id="2.3.1.301">
    <property type="organism ID" value="3445"/>
</dbReference>
<dbReference type="UniPathway" id="UPA00094"/>
<dbReference type="UniPathway" id="UPA00915"/>
<dbReference type="EvolutionaryTrace" id="P9WNG3"/>
<dbReference type="PRO" id="PR:P9WNG3"/>
<dbReference type="Proteomes" id="UP000001584">
    <property type="component" value="Chromosome"/>
</dbReference>
<dbReference type="GO" id="GO:0005737">
    <property type="term" value="C:cytoplasm"/>
    <property type="evidence" value="ECO:0007669"/>
    <property type="project" value="UniProtKB-SubCell"/>
</dbReference>
<dbReference type="GO" id="GO:0004315">
    <property type="term" value="F:3-oxoacyl-[acyl-carrier-protein] synthase activity"/>
    <property type="evidence" value="ECO:0000314"/>
    <property type="project" value="MTBBASE"/>
</dbReference>
<dbReference type="GO" id="GO:0033818">
    <property type="term" value="F:beta-ketoacyl-acyl-carrier-protein synthase III activity"/>
    <property type="evidence" value="ECO:0000314"/>
    <property type="project" value="MTBBASE"/>
</dbReference>
<dbReference type="GO" id="GO:0061990">
    <property type="term" value="F:beta-ketodecanoyl-[acyl-carrier-protein] synthase activity"/>
    <property type="evidence" value="ECO:0007669"/>
    <property type="project" value="RHEA"/>
</dbReference>
<dbReference type="GO" id="GO:0000062">
    <property type="term" value="F:fatty-acyl-CoA binding"/>
    <property type="evidence" value="ECO:0000314"/>
    <property type="project" value="MTBBASE"/>
</dbReference>
<dbReference type="GO" id="GO:0006633">
    <property type="term" value="P:fatty acid biosynthetic process"/>
    <property type="evidence" value="ECO:0000314"/>
    <property type="project" value="MTBBASE"/>
</dbReference>
<dbReference type="GO" id="GO:0030497">
    <property type="term" value="P:fatty acid elongation"/>
    <property type="evidence" value="ECO:0000314"/>
    <property type="project" value="MTBBASE"/>
</dbReference>
<dbReference type="GO" id="GO:0008610">
    <property type="term" value="P:lipid biosynthetic process"/>
    <property type="evidence" value="ECO:0000314"/>
    <property type="project" value="MTBBASE"/>
</dbReference>
<dbReference type="GO" id="GO:0035336">
    <property type="term" value="P:long-chain fatty-acyl-CoA metabolic process"/>
    <property type="evidence" value="ECO:0000314"/>
    <property type="project" value="MTBBASE"/>
</dbReference>
<dbReference type="CDD" id="cd00830">
    <property type="entry name" value="KAS_III"/>
    <property type="match status" value="1"/>
</dbReference>
<dbReference type="FunFam" id="3.40.47.10:FF:000071">
    <property type="entry name" value="3-oxoacyl-[acyl-carrier-protein] synthase 3"/>
    <property type="match status" value="1"/>
</dbReference>
<dbReference type="FunFam" id="3.40.47.10:FF:000076">
    <property type="entry name" value="3-oxoacyl-[acyl-carrier-protein] synthase 3"/>
    <property type="match status" value="1"/>
</dbReference>
<dbReference type="Gene3D" id="3.40.47.10">
    <property type="match status" value="2"/>
</dbReference>
<dbReference type="HAMAP" id="MF_01815">
    <property type="entry name" value="FabH"/>
    <property type="match status" value="1"/>
</dbReference>
<dbReference type="InterPro" id="IPR013747">
    <property type="entry name" value="ACP_syn_III_C"/>
</dbReference>
<dbReference type="InterPro" id="IPR013751">
    <property type="entry name" value="ACP_syn_III_N"/>
</dbReference>
<dbReference type="InterPro" id="IPR004655">
    <property type="entry name" value="FabH"/>
</dbReference>
<dbReference type="InterPro" id="IPR016039">
    <property type="entry name" value="Thiolase-like"/>
</dbReference>
<dbReference type="NCBIfam" id="TIGR00747">
    <property type="entry name" value="fabH"/>
    <property type="match status" value="1"/>
</dbReference>
<dbReference type="NCBIfam" id="NF006829">
    <property type="entry name" value="PRK09352.1"/>
    <property type="match status" value="1"/>
</dbReference>
<dbReference type="PANTHER" id="PTHR43091">
    <property type="entry name" value="3-OXOACYL-[ACYL-CARRIER-PROTEIN] SYNTHASE"/>
    <property type="match status" value="1"/>
</dbReference>
<dbReference type="PANTHER" id="PTHR43091:SF1">
    <property type="entry name" value="BETA-KETOACYL-[ACYL-CARRIER-PROTEIN] SYNTHASE III, CHLOROPLASTIC"/>
    <property type="match status" value="1"/>
</dbReference>
<dbReference type="Pfam" id="PF08545">
    <property type="entry name" value="ACP_syn_III"/>
    <property type="match status" value="1"/>
</dbReference>
<dbReference type="Pfam" id="PF08541">
    <property type="entry name" value="ACP_syn_III_C"/>
    <property type="match status" value="1"/>
</dbReference>
<dbReference type="SUPFAM" id="SSF53901">
    <property type="entry name" value="Thiolase-like"/>
    <property type="match status" value="1"/>
</dbReference>